<reference key="1">
    <citation type="journal article" date="2005" name="DNA Res.">
        <title>Complete genome sequence of the facultative anaerobic magnetotactic bacterium Magnetospirillum sp. strain AMB-1.</title>
        <authorList>
            <person name="Matsunaga T."/>
            <person name="Okamura Y."/>
            <person name="Fukuda Y."/>
            <person name="Wahyudi A.T."/>
            <person name="Murase Y."/>
            <person name="Takeyama H."/>
        </authorList>
    </citation>
    <scope>NUCLEOTIDE SEQUENCE [LARGE SCALE GENOMIC DNA]</scope>
    <source>
        <strain>ATCC 700264 / AMB-1</strain>
    </source>
</reference>
<evidence type="ECO:0000255" key="1">
    <source>
        <dbReference type="HAMAP-Rule" id="MF_00392"/>
    </source>
</evidence>
<name>LPXB_PARM1</name>
<organism>
    <name type="scientific">Paramagnetospirillum magneticum (strain ATCC 700264 / AMB-1)</name>
    <name type="common">Magnetospirillum magneticum</name>
    <dbReference type="NCBI Taxonomy" id="342108"/>
    <lineage>
        <taxon>Bacteria</taxon>
        <taxon>Pseudomonadati</taxon>
        <taxon>Pseudomonadota</taxon>
        <taxon>Alphaproteobacteria</taxon>
        <taxon>Rhodospirillales</taxon>
        <taxon>Magnetospirillaceae</taxon>
        <taxon>Paramagnetospirillum</taxon>
    </lineage>
</organism>
<sequence length="390" mass="41913">MLIYLIAGEPSGDLLGGRLMAALKERLGEGVSFAGIGGESMRAEGLTSLFPMTELSVMGLVEVLPRIPKILRRVKQTISDIETKRPDALVTIDSWGFNGRIQAGLKARGVPVPRIHYVAPMVWAWKSGRTKTLARVLDLLLTLLPNEPEWFEKEGLKTLHVGHPVIEGAASRGDGAAFRVRHGFAPDRKLLCVLPGSRHSETAKLLAPFGETIALLARRFPDLAVVVPTVETVADEVSQAVKSWALPSMVVRGPEKYDAFAACDAALAASGTVALELAMARLPAVITYKVSPVSAFIATRFLGLSLKFVTLVNILVDEAVMPELLQDDCRPDKLAAAVEHLLTDEAARALQAAGARRALEKLGLGGESPGKRAADAVIDFIRQGKEQRNG</sequence>
<comment type="function">
    <text evidence="1">Condensation of UDP-2,3-diacylglucosamine and 2,3-diacylglucosamine-1-phosphate to form lipid A disaccharide, a precursor of lipid A, a phosphorylated glycolipid that anchors the lipopolysaccharide to the outer membrane of the cell.</text>
</comment>
<comment type="catalytic activity">
    <reaction evidence="1">
        <text>a lipid X + a UDP-2-N,3-O-bis[(3R)-3-hydroxyacyl]-alpha-D-glucosamine = a lipid A disaccharide + UDP + H(+)</text>
        <dbReference type="Rhea" id="RHEA:67828"/>
        <dbReference type="ChEBI" id="CHEBI:15378"/>
        <dbReference type="ChEBI" id="CHEBI:58223"/>
        <dbReference type="ChEBI" id="CHEBI:137748"/>
        <dbReference type="ChEBI" id="CHEBI:176338"/>
        <dbReference type="ChEBI" id="CHEBI:176343"/>
        <dbReference type="EC" id="2.4.1.182"/>
    </reaction>
</comment>
<comment type="pathway">
    <text evidence="1">Bacterial outer membrane biogenesis; LPS lipid A biosynthesis.</text>
</comment>
<comment type="similarity">
    <text evidence="1">Belongs to the LpxB family.</text>
</comment>
<feature type="chain" id="PRO_0000255196" description="Lipid-A-disaccharide synthase">
    <location>
        <begin position="1"/>
        <end position="390"/>
    </location>
</feature>
<accession>Q2W4D7</accession>
<dbReference type="EC" id="2.4.1.182" evidence="1"/>
<dbReference type="EMBL" id="AP007255">
    <property type="protein sequence ID" value="BAE51288.1"/>
    <property type="molecule type" value="Genomic_DNA"/>
</dbReference>
<dbReference type="RefSeq" id="WP_011384865.1">
    <property type="nucleotide sequence ID" value="NC_007626.1"/>
</dbReference>
<dbReference type="SMR" id="Q2W4D7"/>
<dbReference type="STRING" id="342108.amb2484"/>
<dbReference type="CAZy" id="GT19">
    <property type="family name" value="Glycosyltransferase Family 19"/>
</dbReference>
<dbReference type="KEGG" id="mag:amb2484"/>
<dbReference type="HOGENOM" id="CLU_036577_3_0_5"/>
<dbReference type="OrthoDB" id="9801642at2"/>
<dbReference type="UniPathway" id="UPA00973"/>
<dbReference type="Proteomes" id="UP000007058">
    <property type="component" value="Chromosome"/>
</dbReference>
<dbReference type="GO" id="GO:0016020">
    <property type="term" value="C:membrane"/>
    <property type="evidence" value="ECO:0007669"/>
    <property type="project" value="GOC"/>
</dbReference>
<dbReference type="GO" id="GO:0008915">
    <property type="term" value="F:lipid-A-disaccharide synthase activity"/>
    <property type="evidence" value="ECO:0007669"/>
    <property type="project" value="UniProtKB-UniRule"/>
</dbReference>
<dbReference type="GO" id="GO:0005543">
    <property type="term" value="F:phospholipid binding"/>
    <property type="evidence" value="ECO:0007669"/>
    <property type="project" value="TreeGrafter"/>
</dbReference>
<dbReference type="GO" id="GO:0009245">
    <property type="term" value="P:lipid A biosynthetic process"/>
    <property type="evidence" value="ECO:0007669"/>
    <property type="project" value="UniProtKB-UniRule"/>
</dbReference>
<dbReference type="HAMAP" id="MF_00392">
    <property type="entry name" value="LpxB"/>
    <property type="match status" value="1"/>
</dbReference>
<dbReference type="InterPro" id="IPR003835">
    <property type="entry name" value="Glyco_trans_19"/>
</dbReference>
<dbReference type="NCBIfam" id="TIGR00215">
    <property type="entry name" value="lpxB"/>
    <property type="match status" value="1"/>
</dbReference>
<dbReference type="PANTHER" id="PTHR30372">
    <property type="entry name" value="LIPID-A-DISACCHARIDE SYNTHASE"/>
    <property type="match status" value="1"/>
</dbReference>
<dbReference type="PANTHER" id="PTHR30372:SF4">
    <property type="entry name" value="LIPID-A-DISACCHARIDE SYNTHASE, MITOCHONDRIAL-RELATED"/>
    <property type="match status" value="1"/>
</dbReference>
<dbReference type="Pfam" id="PF02684">
    <property type="entry name" value="LpxB"/>
    <property type="match status" value="1"/>
</dbReference>
<dbReference type="SUPFAM" id="SSF53756">
    <property type="entry name" value="UDP-Glycosyltransferase/glycogen phosphorylase"/>
    <property type="match status" value="1"/>
</dbReference>
<gene>
    <name evidence="1" type="primary">lpxB</name>
    <name type="ordered locus">amb2484</name>
</gene>
<keyword id="KW-0328">Glycosyltransferase</keyword>
<keyword id="KW-0441">Lipid A biosynthesis</keyword>
<keyword id="KW-0444">Lipid biosynthesis</keyword>
<keyword id="KW-0443">Lipid metabolism</keyword>
<keyword id="KW-0808">Transferase</keyword>
<proteinExistence type="inferred from homology"/>
<protein>
    <recommendedName>
        <fullName evidence="1">Lipid-A-disaccharide synthase</fullName>
        <ecNumber evidence="1">2.4.1.182</ecNumber>
    </recommendedName>
</protein>